<name>SUSD3_HUMAN</name>
<evidence type="ECO:0000255" key="1"/>
<evidence type="ECO:0000255" key="2">
    <source>
        <dbReference type="PROSITE-ProRule" id="PRU00302"/>
    </source>
</evidence>
<evidence type="ECO:0000256" key="3">
    <source>
        <dbReference type="SAM" id="MobiDB-lite"/>
    </source>
</evidence>
<evidence type="ECO:0000269" key="4">
    <source>
    </source>
</evidence>
<evidence type="ECO:0000269" key="5">
    <source>
    </source>
</evidence>
<evidence type="ECO:0000303" key="6">
    <source>
    </source>
</evidence>
<evidence type="ECO:0000303" key="7">
    <source>
    </source>
</evidence>
<evidence type="ECO:0000305" key="8"/>
<comment type="function">
    <text evidence="5">May play a role in breast tumorigenesis by promoting estrogen-dependent cell proliferation, cell-cell interactions and migration.</text>
</comment>
<comment type="interaction">
    <interactant intactId="EBI-18194029">
        <id>Q96L08</id>
    </interactant>
    <interactant intactId="EBI-12109402">
        <id>Q86W74-2</id>
        <label>ANKRD46</label>
    </interactant>
    <organismsDiffer>false</organismsDiffer>
    <experiments>3</experiments>
</comment>
<comment type="interaction">
    <interactant intactId="EBI-18194029">
        <id>Q96L08</id>
    </interactant>
    <interactant intactId="EBI-1172335">
        <id>P07306</id>
        <label>ASGR1</label>
    </interactant>
    <organismsDiffer>false</organismsDiffer>
    <experiments>3</experiments>
</comment>
<comment type="interaction">
    <interactant intactId="EBI-18194029">
        <id>Q96L08</id>
    </interactant>
    <interactant intactId="EBI-721179">
        <id>P27449</id>
        <label>ATP6V0C</label>
    </interactant>
    <organismsDiffer>false</organismsDiffer>
    <experiments>3</experiments>
</comment>
<comment type="interaction">
    <interactant intactId="EBI-18194029">
        <id>Q96L08</id>
    </interactant>
    <interactant intactId="EBI-707714">
        <id>Q92843</id>
        <label>BCL2L2</label>
    </interactant>
    <organismsDiffer>false</organismsDiffer>
    <experiments>3</experiments>
</comment>
<comment type="interaction">
    <interactant intactId="EBI-18194029">
        <id>Q96L08</id>
    </interactant>
    <interactant intactId="EBI-2130213">
        <id>Q99675</id>
        <label>CGRRF1</label>
    </interactant>
    <organismsDiffer>false</organismsDiffer>
    <experiments>3</experiments>
</comment>
<comment type="interaction">
    <interactant intactId="EBI-18194029">
        <id>Q96L08</id>
    </interactant>
    <interactant intactId="EBI-12256978">
        <id>Q8N6F1-2</id>
        <label>CLDN19</label>
    </interactant>
    <organismsDiffer>false</organismsDiffer>
    <experiments>3</experiments>
</comment>
<comment type="interaction">
    <interactant intactId="EBI-18194029">
        <id>Q96L08</id>
    </interactant>
    <interactant intactId="EBI-18201031">
        <id>Q96B33</id>
        <label>CLDN23</label>
    </interactant>
    <organismsDiffer>false</organismsDiffer>
    <experiments>3</experiments>
</comment>
<comment type="interaction">
    <interactant intactId="EBI-18194029">
        <id>Q96L08</id>
    </interactant>
    <interactant intactId="EBI-11989440">
        <id>Q9BXN2-6</id>
        <label>CLEC7A</label>
    </interactant>
    <organismsDiffer>false</organismsDiffer>
    <experiments>3</experiments>
</comment>
<comment type="interaction">
    <interactant intactId="EBI-18194029">
        <id>Q96L08</id>
    </interactant>
    <interactant intactId="EBI-12208021">
        <id>Q8TBE1</id>
        <label>CNIH3</label>
    </interactant>
    <organismsDiffer>false</organismsDiffer>
    <experiments>3</experiments>
</comment>
<comment type="interaction">
    <interactant intactId="EBI-18194029">
        <id>Q96L08</id>
    </interactant>
    <interactant intactId="EBI-3911467">
        <id>Q07325</id>
        <label>CXCL9</label>
    </interactant>
    <organismsDiffer>false</organismsDiffer>
    <experiments>3</experiments>
</comment>
<comment type="interaction">
    <interactant intactId="EBI-18194029">
        <id>Q96L08</id>
    </interactant>
    <interactant intactId="EBI-10215665">
        <id>P56851</id>
        <label>EDDM3B</label>
    </interactant>
    <organismsDiffer>false</organismsDiffer>
    <experiments>3</experiments>
</comment>
<comment type="interaction">
    <interactant intactId="EBI-18194029">
        <id>Q96L08</id>
    </interactant>
    <interactant intactId="EBI-5916693">
        <id>Q9HCP6</id>
        <label>HHATL</label>
    </interactant>
    <organismsDiffer>false</organismsDiffer>
    <experiments>3</experiments>
</comment>
<comment type="interaction">
    <interactant intactId="EBI-18194029">
        <id>Q96L08</id>
    </interactant>
    <interactant intactId="EBI-12007212">
        <id>Q86UP2-3</id>
        <label>KTN1</label>
    </interactant>
    <organismsDiffer>false</organismsDiffer>
    <experiments>3</experiments>
</comment>
<comment type="interaction">
    <interactant intactId="EBI-18194029">
        <id>Q96L08</id>
    </interactant>
    <interactant intactId="EBI-2804156">
        <id>Q6UX06</id>
        <label>OLFM4</label>
    </interactant>
    <organismsDiffer>false</organismsDiffer>
    <experiments>3</experiments>
</comment>
<comment type="interaction">
    <interactant intactId="EBI-18194029">
        <id>Q96L08</id>
    </interactant>
    <interactant intactId="EBI-12188331">
        <id>P60201-2</id>
        <label>PLP1</label>
    </interactant>
    <organismsDiffer>false</organismsDiffer>
    <experiments>3</experiments>
</comment>
<comment type="interaction">
    <interactant intactId="EBI-18194029">
        <id>Q96L08</id>
    </interactant>
    <interactant intactId="EBI-1052363">
        <id>Q9NS64</id>
        <label>RPRM</label>
    </interactant>
    <organismsDiffer>false</organismsDiffer>
    <experiments>3</experiments>
</comment>
<comment type="interaction">
    <interactant intactId="EBI-18194029">
        <id>Q96L08</id>
    </interactant>
    <interactant intactId="EBI-8652744">
        <id>Q96IW7</id>
        <label>SEC22A</label>
    </interactant>
    <organismsDiffer>false</organismsDiffer>
    <experiments>3</experiments>
</comment>
<comment type="interaction">
    <interactant intactId="EBI-18194029">
        <id>Q96L08</id>
    </interactant>
    <interactant intactId="EBI-10226799">
        <id>Q0VAQ4</id>
        <label>SMAGP</label>
    </interactant>
    <organismsDiffer>false</organismsDiffer>
    <experiments>3</experiments>
</comment>
<comment type="interaction">
    <interactant intactId="EBI-18194029">
        <id>Q96L08</id>
    </interactant>
    <interactant intactId="EBI-8640191">
        <id>Q9NRQ5</id>
        <label>SMCO4</label>
    </interactant>
    <organismsDiffer>false</organismsDiffer>
    <experiments>3</experiments>
</comment>
<comment type="interaction">
    <interactant intactId="EBI-18194029">
        <id>Q96L08</id>
    </interactant>
    <interactant intactId="EBI-11603430">
        <id>Q6PL24</id>
        <label>TMED8</label>
    </interactant>
    <organismsDiffer>false</organismsDiffer>
    <experiments>3</experiments>
</comment>
<comment type="interaction">
    <interactant intactId="EBI-18194029">
        <id>Q96L08</id>
    </interactant>
    <interactant intactId="EBI-723946">
        <id>P17152</id>
        <label>TMEM11</label>
    </interactant>
    <organismsDiffer>false</organismsDiffer>
    <experiments>3</experiments>
</comment>
<comment type="interaction">
    <interactant intactId="EBI-18194029">
        <id>Q96L08</id>
    </interactant>
    <interactant intactId="EBI-348587">
        <id>Q9BVK8</id>
        <label>TMEM147</label>
    </interactant>
    <organismsDiffer>false</organismsDiffer>
    <experiments>3</experiments>
</comment>
<comment type="interaction">
    <interactant intactId="EBI-18194029">
        <id>Q96L08</id>
    </interactant>
    <interactant intactId="EBI-10255122">
        <id>Q6ZP80</id>
        <label>TMEM182</label>
    </interactant>
    <organismsDiffer>false</organismsDiffer>
    <experiments>3</experiments>
</comment>
<comment type="interaction">
    <interactant intactId="EBI-18194029">
        <id>Q96L08</id>
    </interactant>
    <interactant intactId="EBI-13370320">
        <id>Q9BQJ4</id>
        <label>TMEM47</label>
    </interactant>
    <organismsDiffer>false</organismsDiffer>
    <experiments>3</experiments>
</comment>
<comment type="interaction">
    <interactant intactId="EBI-18194029">
        <id>Q96L08</id>
    </interactant>
    <interactant intactId="EBI-7333781">
        <id>Q9Y2Y6</id>
        <label>TMEM98</label>
    </interactant>
    <organismsDiffer>false</organismsDiffer>
    <experiments>3</experiments>
</comment>
<comment type="interaction">
    <interactant intactId="EBI-18194029">
        <id>Q96L08</id>
    </interactant>
    <interactant intactId="EBI-10313040">
        <id>Q9NRS4</id>
        <label>TMPRSS4</label>
    </interactant>
    <organismsDiffer>false</organismsDiffer>
    <experiments>3</experiments>
</comment>
<comment type="subcellular location">
    <subcellularLocation>
        <location evidence="5">Cell membrane</location>
        <topology evidence="8">Single-pass membrane protein</topology>
    </subcellularLocation>
    <text evidence="5">Prominently localized to cell-cell borders.</text>
</comment>
<comment type="alternative products">
    <event type="alternative splicing"/>
    <isoform>
        <id>Q96L08-1</id>
        <name>1</name>
        <sequence type="displayed"/>
    </isoform>
    <isoform>
        <id>Q96L08-2</id>
        <name>2</name>
        <sequence type="described" ref="VSP_020834"/>
    </isoform>
    <isoform>
        <id>Q96L08-3</id>
        <name>3</name>
        <sequence type="described" ref="VSP_020833"/>
    </isoform>
</comment>
<comment type="tissue specificity">
    <text evidence="5">Highly expressed in estrogen receptor-positive breast tumors.</text>
</comment>
<comment type="induction">
    <text evidence="5">Up-regulated upon treatment with estradiol in MCF-7 cells.</text>
</comment>
<reference key="1">
    <citation type="journal article" date="2003" name="Genome Res.">
        <title>The secreted protein discovery initiative (SPDI), a large-scale effort to identify novel human secreted and transmembrane proteins: a bioinformatics assessment.</title>
        <authorList>
            <person name="Clark H.F."/>
            <person name="Gurney A.L."/>
            <person name="Abaya E."/>
            <person name="Baker K."/>
            <person name="Baldwin D.T."/>
            <person name="Brush J."/>
            <person name="Chen J."/>
            <person name="Chow B."/>
            <person name="Chui C."/>
            <person name="Crowley C."/>
            <person name="Currell B."/>
            <person name="Deuel B."/>
            <person name="Dowd P."/>
            <person name="Eaton D."/>
            <person name="Foster J.S."/>
            <person name="Grimaldi C."/>
            <person name="Gu Q."/>
            <person name="Hass P.E."/>
            <person name="Heldens S."/>
            <person name="Huang A."/>
            <person name="Kim H.S."/>
            <person name="Klimowski L."/>
            <person name="Jin Y."/>
            <person name="Johnson S."/>
            <person name="Lee J."/>
            <person name="Lewis L."/>
            <person name="Liao D."/>
            <person name="Mark M.R."/>
            <person name="Robbie E."/>
            <person name="Sanchez C."/>
            <person name="Schoenfeld J."/>
            <person name="Seshagiri S."/>
            <person name="Simmons L."/>
            <person name="Singh J."/>
            <person name="Smith V."/>
            <person name="Stinson J."/>
            <person name="Vagts A."/>
            <person name="Vandlen R.L."/>
            <person name="Watanabe C."/>
            <person name="Wieand D."/>
            <person name="Woods K."/>
            <person name="Xie M.-H."/>
            <person name="Yansura D.G."/>
            <person name="Yi S."/>
            <person name="Yu G."/>
            <person name="Yuan J."/>
            <person name="Zhang M."/>
            <person name="Zhang Z."/>
            <person name="Goddard A.D."/>
            <person name="Wood W.I."/>
            <person name="Godowski P.J."/>
            <person name="Gray A.M."/>
        </authorList>
    </citation>
    <scope>NUCLEOTIDE SEQUENCE [LARGE SCALE MRNA] (ISOFORM 2)</scope>
</reference>
<reference key="2">
    <citation type="journal article" date="2004" name="Nature">
        <title>DNA sequence and analysis of human chromosome 9.</title>
        <authorList>
            <person name="Humphray S.J."/>
            <person name="Oliver K."/>
            <person name="Hunt A.R."/>
            <person name="Plumb R.W."/>
            <person name="Loveland J.E."/>
            <person name="Howe K.L."/>
            <person name="Andrews T.D."/>
            <person name="Searle S."/>
            <person name="Hunt S.E."/>
            <person name="Scott C.E."/>
            <person name="Jones M.C."/>
            <person name="Ainscough R."/>
            <person name="Almeida J.P."/>
            <person name="Ambrose K.D."/>
            <person name="Ashwell R.I.S."/>
            <person name="Babbage A.K."/>
            <person name="Babbage S."/>
            <person name="Bagguley C.L."/>
            <person name="Bailey J."/>
            <person name="Banerjee R."/>
            <person name="Barker D.J."/>
            <person name="Barlow K.F."/>
            <person name="Bates K."/>
            <person name="Beasley H."/>
            <person name="Beasley O."/>
            <person name="Bird C.P."/>
            <person name="Bray-Allen S."/>
            <person name="Brown A.J."/>
            <person name="Brown J.Y."/>
            <person name="Burford D."/>
            <person name="Burrill W."/>
            <person name="Burton J."/>
            <person name="Carder C."/>
            <person name="Carter N.P."/>
            <person name="Chapman J.C."/>
            <person name="Chen Y."/>
            <person name="Clarke G."/>
            <person name="Clark S.Y."/>
            <person name="Clee C.M."/>
            <person name="Clegg S."/>
            <person name="Collier R.E."/>
            <person name="Corby N."/>
            <person name="Crosier M."/>
            <person name="Cummings A.T."/>
            <person name="Davies J."/>
            <person name="Dhami P."/>
            <person name="Dunn M."/>
            <person name="Dutta I."/>
            <person name="Dyer L.W."/>
            <person name="Earthrowl M.E."/>
            <person name="Faulkner L."/>
            <person name="Fleming C.J."/>
            <person name="Frankish A."/>
            <person name="Frankland J.A."/>
            <person name="French L."/>
            <person name="Fricker D.G."/>
            <person name="Garner P."/>
            <person name="Garnett J."/>
            <person name="Ghori J."/>
            <person name="Gilbert J.G.R."/>
            <person name="Glison C."/>
            <person name="Grafham D.V."/>
            <person name="Gribble S."/>
            <person name="Griffiths C."/>
            <person name="Griffiths-Jones S."/>
            <person name="Grocock R."/>
            <person name="Guy J."/>
            <person name="Hall R.E."/>
            <person name="Hammond S."/>
            <person name="Harley J.L."/>
            <person name="Harrison E.S.I."/>
            <person name="Hart E.A."/>
            <person name="Heath P.D."/>
            <person name="Henderson C.D."/>
            <person name="Hopkins B.L."/>
            <person name="Howard P.J."/>
            <person name="Howden P.J."/>
            <person name="Huckle E."/>
            <person name="Johnson C."/>
            <person name="Johnson D."/>
            <person name="Joy A.A."/>
            <person name="Kay M."/>
            <person name="Keenan S."/>
            <person name="Kershaw J.K."/>
            <person name="Kimberley A.M."/>
            <person name="King A."/>
            <person name="Knights A."/>
            <person name="Laird G.K."/>
            <person name="Langford C."/>
            <person name="Lawlor S."/>
            <person name="Leongamornlert D.A."/>
            <person name="Leversha M."/>
            <person name="Lloyd C."/>
            <person name="Lloyd D.M."/>
            <person name="Lovell J."/>
            <person name="Martin S."/>
            <person name="Mashreghi-Mohammadi M."/>
            <person name="Matthews L."/>
            <person name="McLaren S."/>
            <person name="McLay K.E."/>
            <person name="McMurray A."/>
            <person name="Milne S."/>
            <person name="Nickerson T."/>
            <person name="Nisbett J."/>
            <person name="Nordsiek G."/>
            <person name="Pearce A.V."/>
            <person name="Peck A.I."/>
            <person name="Porter K.M."/>
            <person name="Pandian R."/>
            <person name="Pelan S."/>
            <person name="Phillimore B."/>
            <person name="Povey S."/>
            <person name="Ramsey Y."/>
            <person name="Rand V."/>
            <person name="Scharfe M."/>
            <person name="Sehra H.K."/>
            <person name="Shownkeen R."/>
            <person name="Sims S.K."/>
            <person name="Skuce C.D."/>
            <person name="Smith M."/>
            <person name="Steward C.A."/>
            <person name="Swarbreck D."/>
            <person name="Sycamore N."/>
            <person name="Tester J."/>
            <person name="Thorpe A."/>
            <person name="Tracey A."/>
            <person name="Tromans A."/>
            <person name="Thomas D.W."/>
            <person name="Wall M."/>
            <person name="Wallis J.M."/>
            <person name="West A.P."/>
            <person name="Whitehead S.L."/>
            <person name="Willey D.L."/>
            <person name="Williams S.A."/>
            <person name="Wilming L."/>
            <person name="Wray P.W."/>
            <person name="Young L."/>
            <person name="Ashurst J.L."/>
            <person name="Coulson A."/>
            <person name="Blocker H."/>
            <person name="Durbin R.M."/>
            <person name="Sulston J.E."/>
            <person name="Hubbard T."/>
            <person name="Jackson M.J."/>
            <person name="Bentley D.R."/>
            <person name="Beck S."/>
            <person name="Rogers J."/>
            <person name="Dunham I."/>
        </authorList>
    </citation>
    <scope>NUCLEOTIDE SEQUENCE [LARGE SCALE GENOMIC DNA]</scope>
</reference>
<reference key="3">
    <citation type="journal article" date="2004" name="Genome Res.">
        <title>The status, quality, and expansion of the NIH full-length cDNA project: the Mammalian Gene Collection (MGC).</title>
        <authorList>
            <consortium name="The MGC Project Team"/>
        </authorList>
    </citation>
    <scope>NUCLEOTIDE SEQUENCE [LARGE SCALE MRNA] (ISOFORMS 1 AND 3)</scope>
    <source>
        <tissue>Testis</tissue>
    </source>
</reference>
<reference key="4">
    <citation type="journal article" date="2006" name="Science">
        <title>The consensus coding sequences of human breast and colorectal cancers.</title>
        <authorList>
            <person name="Sjoeblom T."/>
            <person name="Jones S."/>
            <person name="Wood L.D."/>
            <person name="Parsons D.W."/>
            <person name="Lin J."/>
            <person name="Barber T.D."/>
            <person name="Mandelker D."/>
            <person name="Leary R.J."/>
            <person name="Ptak J."/>
            <person name="Silliman N."/>
            <person name="Szabo S."/>
            <person name="Buckhaults P."/>
            <person name="Farrell C."/>
            <person name="Meeh P."/>
            <person name="Markowitz S.D."/>
            <person name="Willis J."/>
            <person name="Dawson D."/>
            <person name="Willson J.K.V."/>
            <person name="Gazdar A.F."/>
            <person name="Hartigan J."/>
            <person name="Wu L."/>
            <person name="Liu C."/>
            <person name="Parmigiani G."/>
            <person name="Park B.H."/>
            <person name="Bachman K.E."/>
            <person name="Papadopoulos N."/>
            <person name="Vogelstein B."/>
            <person name="Kinzler K.W."/>
            <person name="Velculescu V.E."/>
        </authorList>
    </citation>
    <scope>VARIANT [LARGE SCALE ANALYSIS] THR-140</scope>
</reference>
<reference key="5">
    <citation type="journal article" date="2015" name="Oncogene">
        <title>Estrogen-dependent sushi domain containing 3 regulates cytoskeleton organization and migration in breast cancer cells.</title>
        <authorList>
            <person name="Moy I."/>
            <person name="Todorovic V."/>
            <person name="Dubash A.D."/>
            <person name="Coon J.S."/>
            <person name="Parker J.B."/>
            <person name="Buranapramest M."/>
            <person name="Huang C.C."/>
            <person name="Zhao H."/>
            <person name="Green K.J."/>
            <person name="Bulun S.E."/>
        </authorList>
    </citation>
    <scope>SUBCELLULAR LOCATION</scope>
    <scope>FUNCTION</scope>
    <scope>TISSUE SPECIFICITY</scope>
</reference>
<proteinExistence type="evidence at protein level"/>
<sequence length="255" mass="27119">MRWAAATLRGKARPRGRAGVTTPAPGNRTGTCAKLRLPPQATFQVLRGNGASVGTVLMFRCPSNHQMVGSGLLTCTWKGSIAEWSSGSPVCKLVPPHETFGFKVAVIASIVSCAIILLMSMAFLTCCLLKCVKKSKRRRSNRSAQLWSQLKDEDLETVQAAYLGLKHFNKPVSGPSQAHDNHSFTTDHGESTSKLASVTRSVDKDPGIPRALSLSGSSSSPQAQVMVHMANPRQPLPASGLATGMPQQPAAYALG</sequence>
<organism>
    <name type="scientific">Homo sapiens</name>
    <name type="common">Human</name>
    <dbReference type="NCBI Taxonomy" id="9606"/>
    <lineage>
        <taxon>Eukaryota</taxon>
        <taxon>Metazoa</taxon>
        <taxon>Chordata</taxon>
        <taxon>Craniata</taxon>
        <taxon>Vertebrata</taxon>
        <taxon>Euteleostomi</taxon>
        <taxon>Mammalia</taxon>
        <taxon>Eutheria</taxon>
        <taxon>Euarchontoglires</taxon>
        <taxon>Primates</taxon>
        <taxon>Haplorrhini</taxon>
        <taxon>Catarrhini</taxon>
        <taxon>Hominidae</taxon>
        <taxon>Homo</taxon>
    </lineage>
</organism>
<keyword id="KW-0025">Alternative splicing</keyword>
<keyword id="KW-1003">Cell membrane</keyword>
<keyword id="KW-1015">Disulfide bond</keyword>
<keyword id="KW-0325">Glycoprotein</keyword>
<keyword id="KW-0472">Membrane</keyword>
<keyword id="KW-1267">Proteomics identification</keyword>
<keyword id="KW-1185">Reference proteome</keyword>
<keyword id="KW-0768">Sushi</keyword>
<keyword id="KW-0812">Transmembrane</keyword>
<keyword id="KW-1133">Transmembrane helix</keyword>
<gene>
    <name type="primary">SUSD3</name>
    <name type="ORF">UNQ9387/PRO34275</name>
</gene>
<feature type="chain" id="PRO_0000251973" description="Sushi domain-containing protein 3">
    <location>
        <begin position="1"/>
        <end position="255"/>
    </location>
</feature>
<feature type="topological domain" description="Extracellular" evidence="1">
    <location>
        <begin position="1"/>
        <end position="103"/>
    </location>
</feature>
<feature type="transmembrane region" description="Helical" evidence="1">
    <location>
        <begin position="104"/>
        <end position="124"/>
    </location>
</feature>
<feature type="topological domain" description="Cytoplasmic" evidence="1">
    <location>
        <begin position="125"/>
        <end position="255"/>
    </location>
</feature>
<feature type="domain" description="Sushi" evidence="2">
    <location>
        <begin position="30"/>
        <end position="93"/>
    </location>
</feature>
<feature type="region of interest" description="Disordered" evidence="3">
    <location>
        <begin position="1"/>
        <end position="25"/>
    </location>
</feature>
<feature type="region of interest" description="Disordered" evidence="3">
    <location>
        <begin position="173"/>
        <end position="255"/>
    </location>
</feature>
<feature type="compositionally biased region" description="Basic and acidic residues" evidence="3">
    <location>
        <begin position="179"/>
        <end position="191"/>
    </location>
</feature>
<feature type="glycosylation site" description="N-linked (GlcNAc...) asparagine" evidence="1">
    <location>
        <position position="27"/>
    </location>
</feature>
<feature type="disulfide bond" evidence="2">
    <location>
        <begin position="32"/>
        <end position="75"/>
    </location>
</feature>
<feature type="disulfide bond" evidence="2">
    <location>
        <begin position="61"/>
        <end position="91"/>
    </location>
</feature>
<feature type="splice variant" id="VSP_020833" description="In isoform 3." evidence="7">
    <location>
        <begin position="1"/>
        <end position="118"/>
    </location>
</feature>
<feature type="splice variant" id="VSP_020834" description="In isoform 2." evidence="6">
    <original>MRWAAATLRGKARPRGRAGVTTPAPGNRTG</original>
    <variation>MKNIGLVMEWEIPEIIC</variation>
    <location>
        <begin position="1"/>
        <end position="30"/>
    </location>
</feature>
<feature type="sequence variant" id="VAR_027744" description="In dbSNP:rs1131773.">
    <original>K</original>
    <variation>E</variation>
    <location>
        <position position="136"/>
    </location>
</feature>
<feature type="sequence variant" id="VAR_035663" description="In a breast cancer sample; somatic mutation." evidence="4">
    <original>S</original>
    <variation>T</variation>
    <location>
        <position position="140"/>
    </location>
</feature>
<dbReference type="EMBL" id="AY358190">
    <property type="protein sequence ID" value="AAQ88557.1"/>
    <property type="molecule type" value="mRNA"/>
</dbReference>
<dbReference type="EMBL" id="AL451065">
    <property type="status" value="NOT_ANNOTATED_CDS"/>
    <property type="molecule type" value="Genomic_DNA"/>
</dbReference>
<dbReference type="EMBL" id="BC014601">
    <property type="protein sequence ID" value="AAH14601.1"/>
    <property type="molecule type" value="mRNA"/>
</dbReference>
<dbReference type="EMBL" id="BC041834">
    <property type="protein sequence ID" value="AAH41834.1"/>
    <property type="molecule type" value="mRNA"/>
</dbReference>
<dbReference type="CCDS" id="CCDS6701.1">
    <molecule id="Q96L08-1"/>
</dbReference>
<dbReference type="CCDS" id="CCDS69620.1">
    <molecule id="Q96L08-2"/>
</dbReference>
<dbReference type="RefSeq" id="NP_001273934.1">
    <molecule id="Q96L08-2"/>
    <property type="nucleotide sequence ID" value="NM_001287005.2"/>
</dbReference>
<dbReference type="RefSeq" id="NP_001273935.1">
    <property type="nucleotide sequence ID" value="NM_001287006.1"/>
</dbReference>
<dbReference type="RefSeq" id="NP_001273937.1">
    <property type="nucleotide sequence ID" value="NM_001287008.1"/>
</dbReference>
<dbReference type="RefSeq" id="NP_659443.1">
    <molecule id="Q96L08-1"/>
    <property type="nucleotide sequence ID" value="NM_145006.4"/>
</dbReference>
<dbReference type="RefSeq" id="XP_011516660.1">
    <molecule id="Q96L08-2"/>
    <property type="nucleotide sequence ID" value="XM_011518358.2"/>
</dbReference>
<dbReference type="RefSeq" id="XP_011516661.1">
    <molecule id="Q96L08-2"/>
    <property type="nucleotide sequence ID" value="XM_011518359.2"/>
</dbReference>
<dbReference type="RefSeq" id="XP_011516663.1">
    <property type="nucleotide sequence ID" value="XM_011518361.2"/>
</dbReference>
<dbReference type="RefSeq" id="XP_016869939.1">
    <molecule id="Q96L08-2"/>
    <property type="nucleotide sequence ID" value="XM_017014450.2"/>
</dbReference>
<dbReference type="RefSeq" id="XP_047278897.1">
    <molecule id="Q96L08-2"/>
    <property type="nucleotide sequence ID" value="XM_047422941.1"/>
</dbReference>
<dbReference type="RefSeq" id="XP_047278898.1">
    <molecule id="Q96L08-2"/>
    <property type="nucleotide sequence ID" value="XM_047422942.1"/>
</dbReference>
<dbReference type="RefSeq" id="XP_047278899.1">
    <molecule id="Q96L08-2"/>
    <property type="nucleotide sequence ID" value="XM_047422943.1"/>
</dbReference>
<dbReference type="RefSeq" id="XP_054218275.1">
    <molecule id="Q96L08-2"/>
    <property type="nucleotide sequence ID" value="XM_054362300.1"/>
</dbReference>
<dbReference type="RefSeq" id="XP_054218276.1">
    <molecule id="Q96L08-2"/>
    <property type="nucleotide sequence ID" value="XM_054362301.1"/>
</dbReference>
<dbReference type="RefSeq" id="XP_054218277.1">
    <molecule id="Q96L08-2"/>
    <property type="nucleotide sequence ID" value="XM_054362302.1"/>
</dbReference>
<dbReference type="RefSeq" id="XP_054218278.1">
    <molecule id="Q96L08-2"/>
    <property type="nucleotide sequence ID" value="XM_054362303.1"/>
</dbReference>
<dbReference type="SMR" id="Q96L08"/>
<dbReference type="BioGRID" id="128465">
    <property type="interactions" value="51"/>
</dbReference>
<dbReference type="FunCoup" id="Q96L08">
    <property type="interactions" value="555"/>
</dbReference>
<dbReference type="IntAct" id="Q96L08">
    <property type="interactions" value="46"/>
</dbReference>
<dbReference type="STRING" id="9606.ENSP00000364621"/>
<dbReference type="GlyCosmos" id="Q96L08">
    <property type="glycosylation" value="1 site, No reported glycans"/>
</dbReference>
<dbReference type="GlyGen" id="Q96L08">
    <property type="glycosylation" value="1 site"/>
</dbReference>
<dbReference type="iPTMnet" id="Q96L08"/>
<dbReference type="PhosphoSitePlus" id="Q96L08"/>
<dbReference type="SwissPalm" id="Q96L08"/>
<dbReference type="BioMuta" id="SUSD3"/>
<dbReference type="DMDM" id="74751997"/>
<dbReference type="MassIVE" id="Q96L08"/>
<dbReference type="PaxDb" id="9606-ENSP00000364621"/>
<dbReference type="PeptideAtlas" id="Q96L08"/>
<dbReference type="ProteomicsDB" id="77132">
    <molecule id="Q96L08-1"/>
</dbReference>
<dbReference type="ProteomicsDB" id="77133">
    <molecule id="Q96L08-2"/>
</dbReference>
<dbReference type="ProteomicsDB" id="77134">
    <molecule id="Q96L08-3"/>
</dbReference>
<dbReference type="Antibodypedia" id="28340">
    <property type="antibodies" value="42 antibodies from 16 providers"/>
</dbReference>
<dbReference type="DNASU" id="203328"/>
<dbReference type="Ensembl" id="ENST00000375469.5">
    <molecule id="Q96L08-2"/>
    <property type="protein sequence ID" value="ENSP00000364618.1"/>
    <property type="gene ID" value="ENSG00000157303.11"/>
</dbReference>
<dbReference type="Ensembl" id="ENST00000375472.8">
    <molecule id="Q96L08-1"/>
    <property type="protein sequence ID" value="ENSP00000364621.3"/>
    <property type="gene ID" value="ENSG00000157303.11"/>
</dbReference>
<dbReference type="GeneID" id="203328"/>
<dbReference type="KEGG" id="hsa:203328"/>
<dbReference type="MANE-Select" id="ENST00000375472.8">
    <property type="protein sequence ID" value="ENSP00000364621.3"/>
    <property type="RefSeq nucleotide sequence ID" value="NM_145006.4"/>
    <property type="RefSeq protein sequence ID" value="NP_659443.1"/>
</dbReference>
<dbReference type="UCSC" id="uc004atb.5">
    <molecule id="Q96L08-1"/>
    <property type="organism name" value="human"/>
</dbReference>
<dbReference type="AGR" id="HGNC:28391"/>
<dbReference type="CTD" id="203328"/>
<dbReference type="DisGeNET" id="203328"/>
<dbReference type="GeneCards" id="SUSD3"/>
<dbReference type="HGNC" id="HGNC:28391">
    <property type="gene designation" value="SUSD3"/>
</dbReference>
<dbReference type="HPA" id="ENSG00000157303">
    <property type="expression patterns" value="Tissue enhanced (lymphoid tissue, testis)"/>
</dbReference>
<dbReference type="MIM" id="616429">
    <property type="type" value="gene"/>
</dbReference>
<dbReference type="neXtProt" id="NX_Q96L08"/>
<dbReference type="OpenTargets" id="ENSG00000157303"/>
<dbReference type="PharmGKB" id="PA128394766"/>
<dbReference type="VEuPathDB" id="HostDB:ENSG00000157303"/>
<dbReference type="eggNOG" id="ENOG502RY7E">
    <property type="taxonomic scope" value="Eukaryota"/>
</dbReference>
<dbReference type="GeneTree" id="ENSGT00390000006976"/>
<dbReference type="HOGENOM" id="CLU_088608_0_0_1"/>
<dbReference type="InParanoid" id="Q96L08"/>
<dbReference type="OMA" id="QMWYQLR"/>
<dbReference type="OrthoDB" id="9939976at2759"/>
<dbReference type="PAN-GO" id="Q96L08">
    <property type="GO annotations" value="1 GO annotation based on evolutionary models"/>
</dbReference>
<dbReference type="PhylomeDB" id="Q96L08"/>
<dbReference type="TreeFam" id="TF335828"/>
<dbReference type="PathwayCommons" id="Q96L08"/>
<dbReference type="SignaLink" id="Q96L08"/>
<dbReference type="BioGRID-ORCS" id="203328">
    <property type="hits" value="17 hits in 1152 CRISPR screens"/>
</dbReference>
<dbReference type="ChiTaRS" id="SUSD3">
    <property type="organism name" value="human"/>
</dbReference>
<dbReference type="GenomeRNAi" id="203328"/>
<dbReference type="Pharos" id="Q96L08">
    <property type="development level" value="Tdark"/>
</dbReference>
<dbReference type="PRO" id="PR:Q96L08"/>
<dbReference type="Proteomes" id="UP000005640">
    <property type="component" value="Chromosome 9"/>
</dbReference>
<dbReference type="RNAct" id="Q96L08">
    <property type="molecule type" value="protein"/>
</dbReference>
<dbReference type="Bgee" id="ENSG00000157303">
    <property type="expression patterns" value="Expressed in right testis and 109 other cell types or tissues"/>
</dbReference>
<dbReference type="ExpressionAtlas" id="Q96L08">
    <property type="expression patterns" value="baseline and differential"/>
</dbReference>
<dbReference type="GO" id="GO:0005886">
    <property type="term" value="C:plasma membrane"/>
    <property type="evidence" value="ECO:0000314"/>
    <property type="project" value="UniProtKB"/>
</dbReference>
<dbReference type="CDD" id="cd00033">
    <property type="entry name" value="CCP"/>
    <property type="match status" value="1"/>
</dbReference>
<dbReference type="FunFam" id="2.10.70.10:FF:000102">
    <property type="entry name" value="Sushi domain containing 3"/>
    <property type="match status" value="1"/>
</dbReference>
<dbReference type="Gene3D" id="2.10.70.10">
    <property type="entry name" value="Complement Module, domain 1"/>
    <property type="match status" value="1"/>
</dbReference>
<dbReference type="InterPro" id="IPR053067">
    <property type="entry name" value="SUSD3"/>
</dbReference>
<dbReference type="InterPro" id="IPR035976">
    <property type="entry name" value="Sushi/SCR/CCP_sf"/>
</dbReference>
<dbReference type="InterPro" id="IPR000436">
    <property type="entry name" value="Sushi_SCR_CCP_dom"/>
</dbReference>
<dbReference type="PANTHER" id="PTHR46879">
    <property type="entry name" value="SUSHI DOMAIN-CONTAINING PROTEIN 3"/>
    <property type="match status" value="1"/>
</dbReference>
<dbReference type="PANTHER" id="PTHR46879:SF1">
    <property type="entry name" value="SUSHI DOMAIN-CONTAINING PROTEIN 3"/>
    <property type="match status" value="1"/>
</dbReference>
<dbReference type="Pfam" id="PF00084">
    <property type="entry name" value="Sushi"/>
    <property type="match status" value="1"/>
</dbReference>
<dbReference type="SMART" id="SM00032">
    <property type="entry name" value="CCP"/>
    <property type="match status" value="1"/>
</dbReference>
<dbReference type="SUPFAM" id="SSF57535">
    <property type="entry name" value="Complement control module/SCR domain"/>
    <property type="match status" value="1"/>
</dbReference>
<dbReference type="PROSITE" id="PS50923">
    <property type="entry name" value="SUSHI"/>
    <property type="match status" value="1"/>
</dbReference>
<protein>
    <recommendedName>
        <fullName>Sushi domain-containing protein 3</fullName>
    </recommendedName>
</protein>
<accession>Q96L08</accession>
<accession>Q49AA6</accession>
<accession>Q6UXV7</accession>